<evidence type="ECO:0000255" key="1">
    <source>
        <dbReference type="HAMAP-Rule" id="MF_00332"/>
    </source>
</evidence>
<evidence type="ECO:0000256" key="2">
    <source>
        <dbReference type="SAM" id="MobiDB-lite"/>
    </source>
</evidence>
<evidence type="ECO:0000305" key="3"/>
<keyword id="KW-0067">ATP-binding</keyword>
<keyword id="KW-0143">Chaperone</keyword>
<keyword id="KW-0547">Nucleotide-binding</keyword>
<keyword id="KW-0597">Phosphoprotein</keyword>
<keyword id="KW-1185">Reference proteome</keyword>
<keyword id="KW-0346">Stress response</keyword>
<feature type="chain" id="PRO_0000225975" description="Chaperone protein DnaK">
    <location>
        <begin position="1"/>
        <end position="644"/>
    </location>
</feature>
<feature type="region of interest" description="Disordered" evidence="2">
    <location>
        <begin position="605"/>
        <end position="644"/>
    </location>
</feature>
<feature type="compositionally biased region" description="Polar residues" evidence="2">
    <location>
        <begin position="609"/>
        <end position="623"/>
    </location>
</feature>
<feature type="compositionally biased region" description="Acidic residues" evidence="2">
    <location>
        <begin position="629"/>
        <end position="644"/>
    </location>
</feature>
<feature type="modified residue" description="Phosphothreonine; by autocatalysis" evidence="1">
    <location>
        <position position="199"/>
    </location>
</feature>
<sequence>MAKIIGIDLGTTNSCVAVMEGDKPKVIENSEGHRTTPSIVAFTDDNEILVGQSAKRQSVTNPEKTLFAIKRLIGRRFDDPIVQKDIKMVPYKIMKADNGDAWVRVKDQDKAPPQISAEVLRKMKKTAEDYLGEEVKEAVITVPAYFNDSQRQATKDAGRIAGLEVKRIINEPTAAALAYGMDKKRGDSVIAVYDLGGGTFDISIIEIAEVDGEHQFEVLATNGDTFLGGEDFDLALIEYLASEFKKDTGIDLHNDPLALQRLKEAAEKAKIELSSAQQTDVNLPYITADASGPKHLNIKLTRAKLESLVEKLVERTIEPCKTALKDAGLTVSQINEVILVGGQTRMPLVQKTVEEFFGKEPRKDVNPDEAVAVGAAIQAAVLSGEVKDILLLDVTPLSLGIETMGGVMTKLIEKNTTIPTKATQVFSTADDNQTAVTVHVLQGEREQASANKSLGRFDLRDIPPAPRGVPQIEVTFDIDANGILNVSAKDKATGKAQSIVIKASSGLSEEEVAAMVKDAQSHAEEDKKFKEMAELRNQADSLIHSCEKSMKDLADELSEDEKRGIETAISELKEAVQGTDKARIEDKLKVLTDASAKMAERIYAKKSSEGQAAQGQTQSQESTKPAEEGVVDAEFEEVKEEDKK</sequence>
<dbReference type="EMBL" id="AE017354">
    <property type="protein sequence ID" value="AAU28094.1"/>
    <property type="status" value="ALT_INIT"/>
    <property type="molecule type" value="Genomic_DNA"/>
</dbReference>
<dbReference type="RefSeq" id="WP_015444335.1">
    <property type="nucleotide sequence ID" value="NC_002942.5"/>
</dbReference>
<dbReference type="RefSeq" id="YP_096041.1">
    <property type="nucleotide sequence ID" value="NC_002942.5"/>
</dbReference>
<dbReference type="SMR" id="Q5ZTY3"/>
<dbReference type="STRING" id="272624.lpg2025"/>
<dbReference type="PaxDb" id="272624-lpg2025"/>
<dbReference type="GeneID" id="57036019"/>
<dbReference type="KEGG" id="lpn:lpg2025"/>
<dbReference type="PATRIC" id="fig|272624.6.peg.2121"/>
<dbReference type="eggNOG" id="COG0443">
    <property type="taxonomic scope" value="Bacteria"/>
</dbReference>
<dbReference type="HOGENOM" id="CLU_005965_2_1_6"/>
<dbReference type="OrthoDB" id="9766019at2"/>
<dbReference type="Proteomes" id="UP000000609">
    <property type="component" value="Chromosome"/>
</dbReference>
<dbReference type="GO" id="GO:0005524">
    <property type="term" value="F:ATP binding"/>
    <property type="evidence" value="ECO:0007669"/>
    <property type="project" value="UniProtKB-UniRule"/>
</dbReference>
<dbReference type="GO" id="GO:0140662">
    <property type="term" value="F:ATP-dependent protein folding chaperone"/>
    <property type="evidence" value="ECO:0007669"/>
    <property type="project" value="InterPro"/>
</dbReference>
<dbReference type="GO" id="GO:0051082">
    <property type="term" value="F:unfolded protein binding"/>
    <property type="evidence" value="ECO:0007669"/>
    <property type="project" value="InterPro"/>
</dbReference>
<dbReference type="CDD" id="cd10234">
    <property type="entry name" value="ASKHA_NBD_HSP70_DnaK-like"/>
    <property type="match status" value="1"/>
</dbReference>
<dbReference type="FunFam" id="2.60.34.10:FF:000014">
    <property type="entry name" value="Chaperone protein DnaK HSP70"/>
    <property type="match status" value="1"/>
</dbReference>
<dbReference type="FunFam" id="3.30.30.30:FF:000003">
    <property type="entry name" value="Heat shock protein 9"/>
    <property type="match status" value="1"/>
</dbReference>
<dbReference type="FunFam" id="1.20.1270.10:FF:000001">
    <property type="entry name" value="Molecular chaperone DnaK"/>
    <property type="match status" value="1"/>
</dbReference>
<dbReference type="FunFam" id="3.30.420.40:FF:000004">
    <property type="entry name" value="Molecular chaperone DnaK"/>
    <property type="match status" value="1"/>
</dbReference>
<dbReference type="FunFam" id="3.90.640.10:FF:000003">
    <property type="entry name" value="Molecular chaperone DnaK"/>
    <property type="match status" value="1"/>
</dbReference>
<dbReference type="Gene3D" id="1.20.1270.10">
    <property type="match status" value="1"/>
</dbReference>
<dbReference type="Gene3D" id="3.30.420.40">
    <property type="match status" value="2"/>
</dbReference>
<dbReference type="Gene3D" id="3.90.640.10">
    <property type="entry name" value="Actin, Chain A, domain 4"/>
    <property type="match status" value="1"/>
</dbReference>
<dbReference type="Gene3D" id="2.60.34.10">
    <property type="entry name" value="Substrate Binding Domain Of DNAk, Chain A, domain 1"/>
    <property type="match status" value="1"/>
</dbReference>
<dbReference type="HAMAP" id="MF_00332">
    <property type="entry name" value="DnaK"/>
    <property type="match status" value="1"/>
</dbReference>
<dbReference type="InterPro" id="IPR043129">
    <property type="entry name" value="ATPase_NBD"/>
</dbReference>
<dbReference type="InterPro" id="IPR012725">
    <property type="entry name" value="Chaperone_DnaK"/>
</dbReference>
<dbReference type="InterPro" id="IPR018181">
    <property type="entry name" value="Heat_shock_70_CS"/>
</dbReference>
<dbReference type="InterPro" id="IPR029048">
    <property type="entry name" value="HSP70_C_sf"/>
</dbReference>
<dbReference type="InterPro" id="IPR029047">
    <property type="entry name" value="HSP70_peptide-bd_sf"/>
</dbReference>
<dbReference type="InterPro" id="IPR013126">
    <property type="entry name" value="Hsp_70_fam"/>
</dbReference>
<dbReference type="NCBIfam" id="NF001413">
    <property type="entry name" value="PRK00290.1"/>
    <property type="match status" value="1"/>
</dbReference>
<dbReference type="NCBIfam" id="NF003520">
    <property type="entry name" value="PRK05183.1"/>
    <property type="match status" value="1"/>
</dbReference>
<dbReference type="NCBIfam" id="TIGR02350">
    <property type="entry name" value="prok_dnaK"/>
    <property type="match status" value="1"/>
</dbReference>
<dbReference type="PANTHER" id="PTHR19375">
    <property type="entry name" value="HEAT SHOCK PROTEIN 70KDA"/>
    <property type="match status" value="1"/>
</dbReference>
<dbReference type="Pfam" id="PF00012">
    <property type="entry name" value="HSP70"/>
    <property type="match status" value="1"/>
</dbReference>
<dbReference type="PRINTS" id="PR00301">
    <property type="entry name" value="HEATSHOCK70"/>
</dbReference>
<dbReference type="SUPFAM" id="SSF53067">
    <property type="entry name" value="Actin-like ATPase domain"/>
    <property type="match status" value="2"/>
</dbReference>
<dbReference type="SUPFAM" id="SSF100934">
    <property type="entry name" value="Heat shock protein 70kD (HSP70), C-terminal subdomain"/>
    <property type="match status" value="1"/>
</dbReference>
<dbReference type="SUPFAM" id="SSF100920">
    <property type="entry name" value="Heat shock protein 70kD (HSP70), peptide-binding domain"/>
    <property type="match status" value="1"/>
</dbReference>
<dbReference type="PROSITE" id="PS00297">
    <property type="entry name" value="HSP70_1"/>
    <property type="match status" value="1"/>
</dbReference>
<dbReference type="PROSITE" id="PS00329">
    <property type="entry name" value="HSP70_2"/>
    <property type="match status" value="1"/>
</dbReference>
<dbReference type="PROSITE" id="PS01036">
    <property type="entry name" value="HSP70_3"/>
    <property type="match status" value="1"/>
</dbReference>
<comment type="function">
    <text evidence="1">Acts as a chaperone.</text>
</comment>
<comment type="induction">
    <text evidence="1">By stress conditions e.g. heat shock.</text>
</comment>
<comment type="similarity">
    <text evidence="1">Belongs to the heat shock protein 70 family.</text>
</comment>
<comment type="sequence caution" evidence="3">
    <conflict type="erroneous initiation">
        <sequence resource="EMBL-CDS" id="AAU28094"/>
    </conflict>
</comment>
<proteinExistence type="inferred from homology"/>
<reference key="1">
    <citation type="journal article" date="2004" name="Science">
        <title>The genomic sequence of the accidental pathogen Legionella pneumophila.</title>
        <authorList>
            <person name="Chien M."/>
            <person name="Morozova I."/>
            <person name="Shi S."/>
            <person name="Sheng H."/>
            <person name="Chen J."/>
            <person name="Gomez S.M."/>
            <person name="Asamani G."/>
            <person name="Hill K."/>
            <person name="Nuara J."/>
            <person name="Feder M."/>
            <person name="Rineer J."/>
            <person name="Greenberg J.J."/>
            <person name="Steshenko V."/>
            <person name="Park S.H."/>
            <person name="Zhao B."/>
            <person name="Teplitskaya E."/>
            <person name="Edwards J.R."/>
            <person name="Pampou S."/>
            <person name="Georghiou A."/>
            <person name="Chou I.-C."/>
            <person name="Iannuccilli W."/>
            <person name="Ulz M.E."/>
            <person name="Kim D.H."/>
            <person name="Geringer-Sameth A."/>
            <person name="Goldsberry C."/>
            <person name="Morozov P."/>
            <person name="Fischer S.G."/>
            <person name="Segal G."/>
            <person name="Qu X."/>
            <person name="Rzhetsky A."/>
            <person name="Zhang P."/>
            <person name="Cayanis E."/>
            <person name="De Jong P.J."/>
            <person name="Ju J."/>
            <person name="Kalachikov S."/>
            <person name="Shuman H.A."/>
            <person name="Russo J.J."/>
        </authorList>
    </citation>
    <scope>NUCLEOTIDE SEQUENCE [LARGE SCALE GENOMIC DNA]</scope>
    <source>
        <strain>Philadelphia 1 / ATCC 33152 / DSM 7513</strain>
    </source>
</reference>
<organism>
    <name type="scientific">Legionella pneumophila subsp. pneumophila (strain Philadelphia 1 / ATCC 33152 / DSM 7513)</name>
    <dbReference type="NCBI Taxonomy" id="272624"/>
    <lineage>
        <taxon>Bacteria</taxon>
        <taxon>Pseudomonadati</taxon>
        <taxon>Pseudomonadota</taxon>
        <taxon>Gammaproteobacteria</taxon>
        <taxon>Legionellales</taxon>
        <taxon>Legionellaceae</taxon>
        <taxon>Legionella</taxon>
    </lineage>
</organism>
<protein>
    <recommendedName>
        <fullName evidence="1">Chaperone protein DnaK</fullName>
    </recommendedName>
    <alternativeName>
        <fullName evidence="1">HSP70</fullName>
    </alternativeName>
    <alternativeName>
        <fullName evidence="1">Heat shock 70 kDa protein</fullName>
    </alternativeName>
    <alternativeName>
        <fullName evidence="1">Heat shock protein 70</fullName>
    </alternativeName>
</protein>
<gene>
    <name evidence="1" type="primary">dnaK</name>
    <name type="ordered locus">lpg2025</name>
</gene>
<name>DNAK_LEGPH</name>
<accession>Q5ZTY3</accession>